<accession>O62761</accession>
<keyword id="KW-1015">Disulfide bond</keyword>
<keyword id="KW-0325">Glycoprotein</keyword>
<keyword id="KW-0378">Hydrolase</keyword>
<keyword id="KW-0597">Phosphoprotein</keyword>
<keyword id="KW-0964">Secreted</keyword>
<keyword id="KW-0719">Serine esterase</keyword>
<keyword id="KW-0732">Signal</keyword>
<protein>
    <recommendedName>
        <fullName>Cholinesterase</fullName>
        <ecNumber>3.1.1.8</ecNumber>
    </recommendedName>
    <alternativeName>
        <fullName>Acylcholine acylhydrolase</fullName>
    </alternativeName>
    <alternativeName>
        <fullName>Butyrylcholine esterase</fullName>
    </alternativeName>
    <alternativeName>
        <fullName>Choline esterase II</fullName>
    </alternativeName>
    <alternativeName>
        <fullName>Pseudocholinesterase</fullName>
    </alternativeName>
</protein>
<dbReference type="EC" id="3.1.1.8"/>
<dbReference type="EMBL" id="AF053484">
    <property type="protein sequence ID" value="AAC06262.1"/>
    <property type="molecule type" value="mRNA"/>
</dbReference>
<dbReference type="SMR" id="O62761"/>
<dbReference type="ESTHER" id="tiger-BCHE">
    <property type="family name" value="BCHE"/>
</dbReference>
<dbReference type="MEROPS" id="S09.980"/>
<dbReference type="GlyCosmos" id="O62761">
    <property type="glycosylation" value="9 sites, No reported glycans"/>
</dbReference>
<dbReference type="GO" id="GO:0005615">
    <property type="term" value="C:extracellular space"/>
    <property type="evidence" value="ECO:0007669"/>
    <property type="project" value="TreeGrafter"/>
</dbReference>
<dbReference type="GO" id="GO:0005886">
    <property type="term" value="C:plasma membrane"/>
    <property type="evidence" value="ECO:0007669"/>
    <property type="project" value="TreeGrafter"/>
</dbReference>
<dbReference type="GO" id="GO:0003990">
    <property type="term" value="F:acetylcholinesterase activity"/>
    <property type="evidence" value="ECO:0000250"/>
    <property type="project" value="UniProtKB"/>
</dbReference>
<dbReference type="GO" id="GO:0004104">
    <property type="term" value="F:cholinesterase activity"/>
    <property type="evidence" value="ECO:0000250"/>
    <property type="project" value="UniProtKB"/>
</dbReference>
<dbReference type="GO" id="GO:0006581">
    <property type="term" value="P:acetylcholine catabolic process"/>
    <property type="evidence" value="ECO:0007669"/>
    <property type="project" value="TreeGrafter"/>
</dbReference>
<dbReference type="GO" id="GO:0019695">
    <property type="term" value="P:choline metabolic process"/>
    <property type="evidence" value="ECO:0007669"/>
    <property type="project" value="TreeGrafter"/>
</dbReference>
<dbReference type="CDD" id="cd00312">
    <property type="entry name" value="Esterase_lipase"/>
    <property type="match status" value="1"/>
</dbReference>
<dbReference type="FunFam" id="3.40.50.1820:FF:000029">
    <property type="entry name" value="Acetylcholinesterase"/>
    <property type="match status" value="1"/>
</dbReference>
<dbReference type="Gene3D" id="3.40.50.1820">
    <property type="entry name" value="alpha/beta hydrolase"/>
    <property type="match status" value="1"/>
</dbReference>
<dbReference type="InterPro" id="IPR029058">
    <property type="entry name" value="AB_hydrolase_fold"/>
</dbReference>
<dbReference type="InterPro" id="IPR050654">
    <property type="entry name" value="AChE-related_enzymes"/>
</dbReference>
<dbReference type="InterPro" id="IPR014788">
    <property type="entry name" value="AChE_tetra"/>
</dbReference>
<dbReference type="InterPro" id="IPR002018">
    <property type="entry name" value="CarbesteraseB"/>
</dbReference>
<dbReference type="InterPro" id="IPR019826">
    <property type="entry name" value="Carboxylesterase_B_AS"/>
</dbReference>
<dbReference type="InterPro" id="IPR019819">
    <property type="entry name" value="Carboxylesterase_B_CS"/>
</dbReference>
<dbReference type="InterPro" id="IPR000997">
    <property type="entry name" value="Cholinesterase"/>
</dbReference>
<dbReference type="PANTHER" id="PTHR43918">
    <property type="entry name" value="ACETYLCHOLINESTERASE"/>
    <property type="match status" value="1"/>
</dbReference>
<dbReference type="PANTHER" id="PTHR43918:SF5">
    <property type="entry name" value="CHOLINESTERASE"/>
    <property type="match status" value="1"/>
</dbReference>
<dbReference type="Pfam" id="PF08674">
    <property type="entry name" value="AChE_tetra"/>
    <property type="match status" value="1"/>
</dbReference>
<dbReference type="Pfam" id="PF00135">
    <property type="entry name" value="COesterase"/>
    <property type="match status" value="1"/>
</dbReference>
<dbReference type="PRINTS" id="PR00878">
    <property type="entry name" value="CHOLNESTRASE"/>
</dbReference>
<dbReference type="SUPFAM" id="SSF53474">
    <property type="entry name" value="alpha/beta-Hydrolases"/>
    <property type="match status" value="1"/>
</dbReference>
<dbReference type="PROSITE" id="PS00122">
    <property type="entry name" value="CARBOXYLESTERASE_B_1"/>
    <property type="match status" value="1"/>
</dbReference>
<dbReference type="PROSITE" id="PS00941">
    <property type="entry name" value="CARBOXYLESTERASE_B_2"/>
    <property type="match status" value="1"/>
</dbReference>
<proteinExistence type="evidence at transcript level"/>
<comment type="function">
    <text evidence="1">Esterase with broad substrate specificity. Contributes to the inactivation of the neurotransmitter acetylcholine. Can degrade neurotoxic organophosphate esters (By similarity).</text>
</comment>
<comment type="catalytic activity">
    <reaction>
        <text>an acylcholine + H2O = a carboxylate + choline + H(+)</text>
        <dbReference type="Rhea" id="RHEA:21964"/>
        <dbReference type="ChEBI" id="CHEBI:15354"/>
        <dbReference type="ChEBI" id="CHEBI:15377"/>
        <dbReference type="ChEBI" id="CHEBI:15378"/>
        <dbReference type="ChEBI" id="CHEBI:29067"/>
        <dbReference type="ChEBI" id="CHEBI:35287"/>
        <dbReference type="EC" id="3.1.1.8"/>
    </reaction>
</comment>
<comment type="subunit">
    <text evidence="1">Homotetramer; disulfide-linked. Dimer of dimers (By similarity).</text>
</comment>
<comment type="subcellular location">
    <subcellularLocation>
        <location evidence="1">Secreted</location>
    </subcellularLocation>
</comment>
<comment type="similarity">
    <text evidence="5">Belongs to the type-B carboxylesterase/lipase family.</text>
</comment>
<evidence type="ECO:0000250" key="1"/>
<evidence type="ECO:0000250" key="2">
    <source>
        <dbReference type="UniProtKB" id="P06276"/>
    </source>
</evidence>
<evidence type="ECO:0000255" key="3"/>
<evidence type="ECO:0000255" key="4">
    <source>
        <dbReference type="PROSITE-ProRule" id="PRU10039"/>
    </source>
</evidence>
<evidence type="ECO:0000305" key="5"/>
<feature type="signal peptide" evidence="3">
    <location>
        <begin position="1"/>
        <end position="28"/>
    </location>
</feature>
<feature type="chain" id="PRO_0000008615" description="Cholinesterase">
    <location>
        <begin position="29"/>
        <end position="602"/>
    </location>
</feature>
<feature type="active site" description="Acyl-ester intermediate" evidence="4">
    <location>
        <position position="226"/>
    </location>
</feature>
<feature type="active site" description="Charge relay system" evidence="1">
    <location>
        <position position="353"/>
    </location>
</feature>
<feature type="active site" description="Charge relay system" evidence="1">
    <location>
        <position position="466"/>
    </location>
</feature>
<feature type="binding site" evidence="1">
    <location>
        <begin position="144"/>
        <end position="145"/>
    </location>
    <ligand>
        <name>substrate</name>
    </ligand>
</feature>
<feature type="modified residue" description="Phosphoserine" evidence="2">
    <location>
        <position position="226"/>
    </location>
</feature>
<feature type="glycosylation site" description="N-linked (GlcNAc...) asparagine" evidence="3">
    <location>
        <position position="85"/>
    </location>
</feature>
<feature type="glycosylation site" description="N-linked (GlcNAc...) asparagine" evidence="3">
    <location>
        <position position="134"/>
    </location>
</feature>
<feature type="glycosylation site" description="N-linked (GlcNAc...) asparagine" evidence="3">
    <location>
        <position position="269"/>
    </location>
</feature>
<feature type="glycosylation site" description="N-linked (GlcNAc...) asparagine" evidence="3">
    <location>
        <position position="284"/>
    </location>
</feature>
<feature type="glycosylation site" description="N-linked (GlcNAc...) asparagine" evidence="3">
    <location>
        <position position="369"/>
    </location>
</feature>
<feature type="glycosylation site" description="N-linked (GlcNAc...) asparagine" evidence="3">
    <location>
        <position position="483"/>
    </location>
</feature>
<feature type="glycosylation site" description="N-linked (GlcNAc...) asparagine" evidence="3">
    <location>
        <position position="509"/>
    </location>
</feature>
<feature type="glycosylation site" description="N-linked (GlcNAc...) asparagine" evidence="3">
    <location>
        <position position="513"/>
    </location>
</feature>
<feature type="glycosylation site" description="N-linked (GlcNAc...) asparagine" evidence="3">
    <location>
        <position position="514"/>
    </location>
</feature>
<feature type="disulfide bond" evidence="1">
    <location>
        <begin position="93"/>
        <end position="120"/>
    </location>
</feature>
<feature type="disulfide bond" evidence="1">
    <location>
        <begin position="280"/>
        <end position="291"/>
    </location>
</feature>
<feature type="disulfide bond" evidence="1">
    <location>
        <begin position="428"/>
        <end position="547"/>
    </location>
</feature>
<feature type="disulfide bond" description="Interchain" evidence="1">
    <location>
        <position position="599"/>
    </location>
</feature>
<organism>
    <name type="scientific">Panthera tigris tigris</name>
    <name type="common">Bengal tiger</name>
    <dbReference type="NCBI Taxonomy" id="74535"/>
    <lineage>
        <taxon>Eukaryota</taxon>
        <taxon>Metazoa</taxon>
        <taxon>Chordata</taxon>
        <taxon>Craniata</taxon>
        <taxon>Vertebrata</taxon>
        <taxon>Euteleostomi</taxon>
        <taxon>Mammalia</taxon>
        <taxon>Eutheria</taxon>
        <taxon>Laurasiatheria</taxon>
        <taxon>Carnivora</taxon>
        <taxon>Feliformia</taxon>
        <taxon>Felidae</taxon>
        <taxon>Pantherinae</taxon>
        <taxon>Panthera</taxon>
    </lineage>
</organism>
<name>CHLE_PANTT</name>
<gene>
    <name type="primary">BCHE</name>
</gene>
<sequence>MQSKGTIISIQFLLRFLLLWVLIGKSHTEEDIIITTKNGKVRGMNLPVLDGTVTAFLGIPYAQPPLGRLRFKKPQFLTKWSDIWNATKHANSCYQNADQSFPGFPGSEMWNPNTDLSEDCLYLNVWSPTPKPKNATVMIWIYGGGFQTGTSSLPVYDGKFLARVERVIVVSMNYRVGALGFLALPGNPEIPGNMGLFDQQLALQWVQKNIAAFGGNPKSVTLFGESAGAGSVSLHLLSPRSQPLFTRAILQSGSSNAPWAVMSLDEAKNRTLTLAKFIGCSKENDTEIIKCLRNKDPQEILLNELLVVPSDTLLSVNFGPVVDGDFLTDMPDTLLQLGQFKKTQILVGVNKDEGTAFLVYGAPGFSKDNDSIITRKEFQEGLKIYFPGVSEFGREAILFYYVDLLDDQRAEKYREALDDVLGDYNIICPALEFTTKFSELGNNAFFYYFEHRSSQLPWPEWMGVMHGYEIEFVFGLPLERRVNYTRAEEILSRSIMNYWANFAKYGNPNGTQNNSTRWPAFRSTDQKYLTLNAESPKVYTKLRAQQCRFWTLFFPKVLEMTGNIDEAEREWRAGFYRWNNYMMDWKNQFNDYTSKKESCAGL</sequence>
<reference key="1">
    <citation type="journal article" date="2000" name="Biochem. Pharmacol.">
        <title>Determination of the DNA sequences of acetylcholinesterase and butyrylcholinesterase from cat and demonstration of the existence of both in cat plasma.</title>
        <authorList>
            <person name="Bartels C.F."/>
            <person name="Xie W."/>
            <person name="Miller-Lindholm A.K."/>
            <person name="Schopfer L.M."/>
            <person name="Lockridge O."/>
        </authorList>
    </citation>
    <scope>NUCLEOTIDE SEQUENCE [MRNA]</scope>
    <source>
        <tissue>Pituitary</tissue>
    </source>
</reference>